<dbReference type="EMBL" id="CP000539">
    <property type="protein sequence ID" value="ABM42740.1"/>
    <property type="molecule type" value="Genomic_DNA"/>
</dbReference>
<dbReference type="SMR" id="A1W915"/>
<dbReference type="STRING" id="232721.Ajs_2582"/>
<dbReference type="KEGG" id="ajs:Ajs_2582"/>
<dbReference type="eggNOG" id="COG0233">
    <property type="taxonomic scope" value="Bacteria"/>
</dbReference>
<dbReference type="HOGENOM" id="CLU_073981_2_0_4"/>
<dbReference type="Proteomes" id="UP000000645">
    <property type="component" value="Chromosome"/>
</dbReference>
<dbReference type="GO" id="GO:0005829">
    <property type="term" value="C:cytosol"/>
    <property type="evidence" value="ECO:0007669"/>
    <property type="project" value="GOC"/>
</dbReference>
<dbReference type="GO" id="GO:0043023">
    <property type="term" value="F:ribosomal large subunit binding"/>
    <property type="evidence" value="ECO:0007669"/>
    <property type="project" value="TreeGrafter"/>
</dbReference>
<dbReference type="GO" id="GO:0002184">
    <property type="term" value="P:cytoplasmic translational termination"/>
    <property type="evidence" value="ECO:0007669"/>
    <property type="project" value="TreeGrafter"/>
</dbReference>
<dbReference type="CDD" id="cd00520">
    <property type="entry name" value="RRF"/>
    <property type="match status" value="1"/>
</dbReference>
<dbReference type="FunFam" id="1.10.132.20:FF:000001">
    <property type="entry name" value="Ribosome-recycling factor"/>
    <property type="match status" value="1"/>
</dbReference>
<dbReference type="FunFam" id="3.30.1360.40:FF:000001">
    <property type="entry name" value="Ribosome-recycling factor"/>
    <property type="match status" value="1"/>
</dbReference>
<dbReference type="Gene3D" id="3.30.1360.40">
    <property type="match status" value="1"/>
</dbReference>
<dbReference type="Gene3D" id="1.10.132.20">
    <property type="entry name" value="Ribosome-recycling factor"/>
    <property type="match status" value="1"/>
</dbReference>
<dbReference type="HAMAP" id="MF_00040">
    <property type="entry name" value="RRF"/>
    <property type="match status" value="1"/>
</dbReference>
<dbReference type="InterPro" id="IPR002661">
    <property type="entry name" value="Ribosome_recyc_fac"/>
</dbReference>
<dbReference type="InterPro" id="IPR023584">
    <property type="entry name" value="Ribosome_recyc_fac_dom"/>
</dbReference>
<dbReference type="InterPro" id="IPR036191">
    <property type="entry name" value="RRF_sf"/>
</dbReference>
<dbReference type="NCBIfam" id="TIGR00496">
    <property type="entry name" value="frr"/>
    <property type="match status" value="1"/>
</dbReference>
<dbReference type="PANTHER" id="PTHR20982:SF3">
    <property type="entry name" value="MITOCHONDRIAL RIBOSOME RECYCLING FACTOR PSEUDO 1"/>
    <property type="match status" value="1"/>
</dbReference>
<dbReference type="PANTHER" id="PTHR20982">
    <property type="entry name" value="RIBOSOME RECYCLING FACTOR"/>
    <property type="match status" value="1"/>
</dbReference>
<dbReference type="Pfam" id="PF01765">
    <property type="entry name" value="RRF"/>
    <property type="match status" value="1"/>
</dbReference>
<dbReference type="SUPFAM" id="SSF55194">
    <property type="entry name" value="Ribosome recycling factor, RRF"/>
    <property type="match status" value="1"/>
</dbReference>
<organism>
    <name type="scientific">Acidovorax sp. (strain JS42)</name>
    <dbReference type="NCBI Taxonomy" id="232721"/>
    <lineage>
        <taxon>Bacteria</taxon>
        <taxon>Pseudomonadati</taxon>
        <taxon>Pseudomonadota</taxon>
        <taxon>Betaproteobacteria</taxon>
        <taxon>Burkholderiales</taxon>
        <taxon>Comamonadaceae</taxon>
        <taxon>Acidovorax</taxon>
    </lineage>
</organism>
<name>RRF_ACISJ</name>
<accession>A1W915</accession>
<feature type="chain" id="PRO_1000003097" description="Ribosome-recycling factor">
    <location>
        <begin position="1"/>
        <end position="186"/>
    </location>
</feature>
<comment type="function">
    <text evidence="1">Responsible for the release of ribosomes from messenger RNA at the termination of protein biosynthesis. May increase the efficiency of translation by recycling ribosomes from one round of translation to another.</text>
</comment>
<comment type="subcellular location">
    <subcellularLocation>
        <location evidence="1">Cytoplasm</location>
    </subcellularLocation>
</comment>
<comment type="similarity">
    <text evidence="1">Belongs to the RRF family.</text>
</comment>
<protein>
    <recommendedName>
        <fullName evidence="1">Ribosome-recycling factor</fullName>
        <shortName evidence="1">RRF</shortName>
    </recommendedName>
    <alternativeName>
        <fullName evidence="1">Ribosome-releasing factor</fullName>
    </alternativeName>
</protein>
<sequence>MTIADIKKTTEAKMDQSIAAFKNNLAKIRTGRANPQLLDTIHVEYYGSMVPLSQVANVALLDARTISVQPWEKNMGAKIEKAIRESDLGLNPASMGDLIRVPMPPMSEERRKEMTKLARSEGEGAKVAIRNLRRDANEGVKKLVKDKLASEDDQKRAEADVQKTTDKHIAEIDALVAAKEQEIMAI</sequence>
<evidence type="ECO:0000255" key="1">
    <source>
        <dbReference type="HAMAP-Rule" id="MF_00040"/>
    </source>
</evidence>
<gene>
    <name evidence="1" type="primary">frr</name>
    <name type="ordered locus">Ajs_2582</name>
</gene>
<reference key="1">
    <citation type="submission" date="2006-12" db="EMBL/GenBank/DDBJ databases">
        <title>Complete sequence of chromosome 1 of Acidovorax sp. JS42.</title>
        <authorList>
            <person name="Copeland A."/>
            <person name="Lucas S."/>
            <person name="Lapidus A."/>
            <person name="Barry K."/>
            <person name="Detter J.C."/>
            <person name="Glavina del Rio T."/>
            <person name="Dalin E."/>
            <person name="Tice H."/>
            <person name="Pitluck S."/>
            <person name="Chertkov O."/>
            <person name="Brettin T."/>
            <person name="Bruce D."/>
            <person name="Han C."/>
            <person name="Tapia R."/>
            <person name="Gilna P."/>
            <person name="Schmutz J."/>
            <person name="Larimer F."/>
            <person name="Land M."/>
            <person name="Hauser L."/>
            <person name="Kyrpides N."/>
            <person name="Kim E."/>
            <person name="Stahl D."/>
            <person name="Richardson P."/>
        </authorList>
    </citation>
    <scope>NUCLEOTIDE SEQUENCE [LARGE SCALE GENOMIC DNA]</scope>
    <source>
        <strain>JS42</strain>
    </source>
</reference>
<keyword id="KW-0963">Cytoplasm</keyword>
<keyword id="KW-0648">Protein biosynthesis</keyword>
<proteinExistence type="inferred from homology"/>